<name>RK3_CYACA</name>
<proteinExistence type="inferred from homology"/>
<reference key="1">
    <citation type="journal article" date="2000" name="J. Mol. Evol.">
        <title>The structure and gene repertoire of an ancient red algal plastid genome.</title>
        <authorList>
            <person name="Gloeckner G."/>
            <person name="Rosenthal A."/>
            <person name="Valentin K.-U."/>
        </authorList>
    </citation>
    <scope>NUCLEOTIDE SEQUENCE [LARGE SCALE GENOMIC DNA]</scope>
    <source>
        <strain>RK-1</strain>
    </source>
</reference>
<gene>
    <name type="primary">rpl3</name>
</gene>
<geneLocation type="chloroplast"/>
<keyword id="KW-0150">Chloroplast</keyword>
<keyword id="KW-0934">Plastid</keyword>
<keyword id="KW-0687">Ribonucleoprotein</keyword>
<keyword id="KW-0689">Ribosomal protein</keyword>
<keyword id="KW-0694">RNA-binding</keyword>
<keyword id="KW-0699">rRNA-binding</keyword>
<sequence>MKNVDFCTFGVKLGMTQILDNFGNLVPVTIVSQPKPCVITRVTTSLNSQQKLIIQIGCYSDFRANKPTIGYFKKQSVPNLRYLHEFQTYKNNEYQVGKSLDLKELDQQLVQVSAYTIGKGFAGYQKKHKFSRGAMSHGSKSHRRPGSIGAGTTPGRVFPGVKMAGRLGFSRRSIKNLLVLKVDLTNKLFLLKGSVPGKYGNLLLVSLKKTNYFLD</sequence>
<evidence type="ECO:0000250" key="1"/>
<evidence type="ECO:0000256" key="2">
    <source>
        <dbReference type="SAM" id="MobiDB-lite"/>
    </source>
</evidence>
<evidence type="ECO:0000305" key="3"/>
<protein>
    <recommendedName>
        <fullName evidence="3">Large ribosomal subunit protein uL3c</fullName>
    </recommendedName>
    <alternativeName>
        <fullName>50S ribosomal protein L3, chloroplastic</fullName>
    </alternativeName>
</protein>
<organism>
    <name type="scientific">Cyanidium caldarium</name>
    <name type="common">Red alga</name>
    <dbReference type="NCBI Taxonomy" id="2771"/>
    <lineage>
        <taxon>Eukaryota</taxon>
        <taxon>Rhodophyta</taxon>
        <taxon>Bangiophyceae</taxon>
        <taxon>Cyanidiales</taxon>
        <taxon>Cyanidiaceae</taxon>
        <taxon>Cyanidium</taxon>
    </lineage>
</organism>
<accession>Q9TLT2</accession>
<comment type="function">
    <text evidence="1">One of the primary rRNA binding proteins, it binds directly near the 3'-end of the 23S rRNA, where it nucleates assembly of the 50S subunit.</text>
</comment>
<comment type="subunit">
    <text>Part of the 50S ribosomal subunit.</text>
</comment>
<comment type="subcellular location">
    <subcellularLocation>
        <location>Plastid</location>
        <location>Chloroplast</location>
    </subcellularLocation>
</comment>
<comment type="similarity">
    <text evidence="3">Belongs to the universal ribosomal protein uL3 family.</text>
</comment>
<feature type="chain" id="PRO_0000077199" description="Large ribosomal subunit protein uL3c">
    <location>
        <begin position="1"/>
        <end position="215"/>
    </location>
</feature>
<feature type="region of interest" description="Disordered" evidence="2">
    <location>
        <begin position="132"/>
        <end position="151"/>
    </location>
</feature>
<dbReference type="EMBL" id="AF022186">
    <property type="protein sequence ID" value="AAF12907.1"/>
    <property type="molecule type" value="Genomic_DNA"/>
</dbReference>
<dbReference type="RefSeq" id="NP_045187.1">
    <property type="nucleotide sequence ID" value="NC_001840.1"/>
</dbReference>
<dbReference type="SMR" id="Q9TLT2"/>
<dbReference type="GeneID" id="800188"/>
<dbReference type="GO" id="GO:0009507">
    <property type="term" value="C:chloroplast"/>
    <property type="evidence" value="ECO:0007669"/>
    <property type="project" value="UniProtKB-SubCell"/>
</dbReference>
<dbReference type="GO" id="GO:0022625">
    <property type="term" value="C:cytosolic large ribosomal subunit"/>
    <property type="evidence" value="ECO:0007669"/>
    <property type="project" value="TreeGrafter"/>
</dbReference>
<dbReference type="GO" id="GO:0019843">
    <property type="term" value="F:rRNA binding"/>
    <property type="evidence" value="ECO:0007669"/>
    <property type="project" value="UniProtKB-UniRule"/>
</dbReference>
<dbReference type="GO" id="GO:0003735">
    <property type="term" value="F:structural constituent of ribosome"/>
    <property type="evidence" value="ECO:0007669"/>
    <property type="project" value="InterPro"/>
</dbReference>
<dbReference type="GO" id="GO:0006412">
    <property type="term" value="P:translation"/>
    <property type="evidence" value="ECO:0007669"/>
    <property type="project" value="UniProtKB-UniRule"/>
</dbReference>
<dbReference type="FunFam" id="2.40.30.10:FF:000065">
    <property type="entry name" value="50S ribosomal protein L3, chloroplastic"/>
    <property type="match status" value="1"/>
</dbReference>
<dbReference type="Gene3D" id="2.40.30.10">
    <property type="entry name" value="Translation factors"/>
    <property type="match status" value="1"/>
</dbReference>
<dbReference type="HAMAP" id="MF_01325_B">
    <property type="entry name" value="Ribosomal_uL3_B"/>
    <property type="match status" value="1"/>
</dbReference>
<dbReference type="InterPro" id="IPR000597">
    <property type="entry name" value="Ribosomal_uL3"/>
</dbReference>
<dbReference type="InterPro" id="IPR019927">
    <property type="entry name" value="Ribosomal_uL3_bac/org-type"/>
</dbReference>
<dbReference type="InterPro" id="IPR009000">
    <property type="entry name" value="Transl_B-barrel_sf"/>
</dbReference>
<dbReference type="NCBIfam" id="TIGR03625">
    <property type="entry name" value="L3_bact"/>
    <property type="match status" value="1"/>
</dbReference>
<dbReference type="PANTHER" id="PTHR11229">
    <property type="entry name" value="50S RIBOSOMAL PROTEIN L3"/>
    <property type="match status" value="1"/>
</dbReference>
<dbReference type="PANTHER" id="PTHR11229:SF16">
    <property type="entry name" value="LARGE RIBOSOMAL SUBUNIT PROTEIN UL3C"/>
    <property type="match status" value="1"/>
</dbReference>
<dbReference type="Pfam" id="PF00297">
    <property type="entry name" value="Ribosomal_L3"/>
    <property type="match status" value="1"/>
</dbReference>
<dbReference type="SUPFAM" id="SSF50447">
    <property type="entry name" value="Translation proteins"/>
    <property type="match status" value="1"/>
</dbReference>